<sequence length="344" mass="38724">MNSITLLQPDDWHAHLRDGLALKRTVPDLAKQFARAICMPNLVPPVKTVEEALAYRERILAHVPEGNNFDPRMVLYFTDHTSPDEVRKIKESEHVNAIKLYPAGATTNSDNGVSDIRKVYAVIEQLEEHQVPLLLHGEVTHNHVDIFDREKRFLDEVLSPLLKQFPKLKVVLEHITTSDAAHFVLEQDRNVAATITPQHLLFNRNDMLVGGIKPHFYCLPILKRQTHQTTLLEVATSGNPKFFLGTDSAPHAQNAKENACGCAGCYSAPNAIELYAQAFDQVGKLERLEGFASHFGADFYGLPRNTSTITLVKEDNLVPESFDYLDNQKIIPLHAGKTLQWRKV</sequence>
<organism>
    <name type="scientific">Acinetobacter baumannii (strain AB0057)</name>
    <dbReference type="NCBI Taxonomy" id="480119"/>
    <lineage>
        <taxon>Bacteria</taxon>
        <taxon>Pseudomonadati</taxon>
        <taxon>Pseudomonadota</taxon>
        <taxon>Gammaproteobacteria</taxon>
        <taxon>Moraxellales</taxon>
        <taxon>Moraxellaceae</taxon>
        <taxon>Acinetobacter</taxon>
        <taxon>Acinetobacter calcoaceticus/baumannii complex</taxon>
    </lineage>
</organism>
<dbReference type="EC" id="3.5.2.3" evidence="1"/>
<dbReference type="EMBL" id="CP001182">
    <property type="protein sequence ID" value="ACJ40174.1"/>
    <property type="molecule type" value="Genomic_DNA"/>
</dbReference>
<dbReference type="RefSeq" id="WP_001084867.1">
    <property type="nucleotide sequence ID" value="NC_011586.2"/>
</dbReference>
<dbReference type="SMR" id="B7I9G6"/>
<dbReference type="GeneID" id="92795645"/>
<dbReference type="KEGG" id="abn:AB57_1150"/>
<dbReference type="HOGENOM" id="CLU_041558_1_0_6"/>
<dbReference type="UniPathway" id="UPA00070">
    <property type="reaction ID" value="UER00117"/>
</dbReference>
<dbReference type="Proteomes" id="UP000007094">
    <property type="component" value="Chromosome"/>
</dbReference>
<dbReference type="GO" id="GO:0005829">
    <property type="term" value="C:cytosol"/>
    <property type="evidence" value="ECO:0007669"/>
    <property type="project" value="TreeGrafter"/>
</dbReference>
<dbReference type="GO" id="GO:0004151">
    <property type="term" value="F:dihydroorotase activity"/>
    <property type="evidence" value="ECO:0007669"/>
    <property type="project" value="UniProtKB-UniRule"/>
</dbReference>
<dbReference type="GO" id="GO:0008270">
    <property type="term" value="F:zinc ion binding"/>
    <property type="evidence" value="ECO:0007669"/>
    <property type="project" value="UniProtKB-UniRule"/>
</dbReference>
<dbReference type="GO" id="GO:0006207">
    <property type="term" value="P:'de novo' pyrimidine nucleobase biosynthetic process"/>
    <property type="evidence" value="ECO:0007669"/>
    <property type="project" value="TreeGrafter"/>
</dbReference>
<dbReference type="GO" id="GO:0044205">
    <property type="term" value="P:'de novo' UMP biosynthetic process"/>
    <property type="evidence" value="ECO:0007669"/>
    <property type="project" value="UniProtKB-UniRule"/>
</dbReference>
<dbReference type="CDD" id="cd01294">
    <property type="entry name" value="DHOase"/>
    <property type="match status" value="1"/>
</dbReference>
<dbReference type="FunFam" id="3.20.20.140:FF:000006">
    <property type="entry name" value="Dihydroorotase"/>
    <property type="match status" value="1"/>
</dbReference>
<dbReference type="Gene3D" id="3.20.20.140">
    <property type="entry name" value="Metal-dependent hydrolases"/>
    <property type="match status" value="1"/>
</dbReference>
<dbReference type="HAMAP" id="MF_00219">
    <property type="entry name" value="PyrC_classII"/>
    <property type="match status" value="1"/>
</dbReference>
<dbReference type="InterPro" id="IPR006680">
    <property type="entry name" value="Amidohydro-rel"/>
</dbReference>
<dbReference type="InterPro" id="IPR004721">
    <property type="entry name" value="DHOdimr"/>
</dbReference>
<dbReference type="InterPro" id="IPR002195">
    <property type="entry name" value="Dihydroorotase_CS"/>
</dbReference>
<dbReference type="InterPro" id="IPR032466">
    <property type="entry name" value="Metal_Hydrolase"/>
</dbReference>
<dbReference type="NCBIfam" id="TIGR00856">
    <property type="entry name" value="pyrC_dimer"/>
    <property type="match status" value="1"/>
</dbReference>
<dbReference type="PANTHER" id="PTHR43137">
    <property type="entry name" value="DIHYDROOROTASE"/>
    <property type="match status" value="1"/>
</dbReference>
<dbReference type="PANTHER" id="PTHR43137:SF1">
    <property type="entry name" value="DIHYDROOROTASE"/>
    <property type="match status" value="1"/>
</dbReference>
<dbReference type="Pfam" id="PF01979">
    <property type="entry name" value="Amidohydro_1"/>
    <property type="match status" value="1"/>
</dbReference>
<dbReference type="PIRSF" id="PIRSF001237">
    <property type="entry name" value="DHOdimr"/>
    <property type="match status" value="1"/>
</dbReference>
<dbReference type="SUPFAM" id="SSF51556">
    <property type="entry name" value="Metallo-dependent hydrolases"/>
    <property type="match status" value="1"/>
</dbReference>
<dbReference type="PROSITE" id="PS00482">
    <property type="entry name" value="DIHYDROOROTASE_1"/>
    <property type="match status" value="1"/>
</dbReference>
<dbReference type="PROSITE" id="PS00483">
    <property type="entry name" value="DIHYDROOROTASE_2"/>
    <property type="match status" value="1"/>
</dbReference>
<feature type="chain" id="PRO_1000193063" description="Dihydroorotase">
    <location>
        <begin position="1"/>
        <end position="344"/>
    </location>
</feature>
<feature type="active site" evidence="1">
    <location>
        <position position="247"/>
    </location>
</feature>
<feature type="binding site" evidence="1">
    <location>
        <position position="13"/>
    </location>
    <ligand>
        <name>Zn(2+)</name>
        <dbReference type="ChEBI" id="CHEBI:29105"/>
        <label>1</label>
    </ligand>
</feature>
<feature type="binding site" evidence="1">
    <location>
        <begin position="15"/>
        <end position="17"/>
    </location>
    <ligand>
        <name>substrate</name>
    </ligand>
</feature>
<feature type="binding site" evidence="1">
    <location>
        <position position="15"/>
    </location>
    <ligand>
        <name>Zn(2+)</name>
        <dbReference type="ChEBI" id="CHEBI:29105"/>
        <label>1</label>
    </ligand>
</feature>
<feature type="binding site" evidence="1">
    <location>
        <position position="41"/>
    </location>
    <ligand>
        <name>substrate</name>
    </ligand>
</feature>
<feature type="binding site" description="via carbamate group" evidence="1">
    <location>
        <position position="99"/>
    </location>
    <ligand>
        <name>Zn(2+)</name>
        <dbReference type="ChEBI" id="CHEBI:29105"/>
        <label>1</label>
    </ligand>
</feature>
<feature type="binding site" description="via carbamate group" evidence="1">
    <location>
        <position position="99"/>
    </location>
    <ligand>
        <name>Zn(2+)</name>
        <dbReference type="ChEBI" id="CHEBI:29105"/>
        <label>2</label>
    </ligand>
</feature>
<feature type="binding site" evidence="1">
    <location>
        <position position="136"/>
    </location>
    <ligand>
        <name>substrate</name>
    </ligand>
</feature>
<feature type="binding site" evidence="1">
    <location>
        <position position="136"/>
    </location>
    <ligand>
        <name>Zn(2+)</name>
        <dbReference type="ChEBI" id="CHEBI:29105"/>
        <label>2</label>
    </ligand>
</feature>
<feature type="binding site" evidence="1">
    <location>
        <position position="174"/>
    </location>
    <ligand>
        <name>Zn(2+)</name>
        <dbReference type="ChEBI" id="CHEBI:29105"/>
        <label>2</label>
    </ligand>
</feature>
<feature type="binding site" evidence="1">
    <location>
        <position position="219"/>
    </location>
    <ligand>
        <name>substrate</name>
    </ligand>
</feature>
<feature type="binding site" evidence="1">
    <location>
        <position position="247"/>
    </location>
    <ligand>
        <name>Zn(2+)</name>
        <dbReference type="ChEBI" id="CHEBI:29105"/>
        <label>1</label>
    </ligand>
</feature>
<feature type="binding site" evidence="1">
    <location>
        <position position="251"/>
    </location>
    <ligand>
        <name>substrate</name>
    </ligand>
</feature>
<feature type="binding site" evidence="1">
    <location>
        <position position="263"/>
    </location>
    <ligand>
        <name>substrate</name>
    </ligand>
</feature>
<feature type="modified residue" description="N6-carboxylysine" evidence="1">
    <location>
        <position position="99"/>
    </location>
</feature>
<gene>
    <name evidence="1" type="primary">pyrC</name>
    <name type="ordered locus">AB57_1150</name>
</gene>
<protein>
    <recommendedName>
        <fullName evidence="1">Dihydroorotase</fullName>
        <shortName evidence="1">DHOase</shortName>
        <ecNumber evidence="1">3.5.2.3</ecNumber>
    </recommendedName>
</protein>
<comment type="function">
    <text evidence="1">Catalyzes the reversible cyclization of carbamoyl aspartate to dihydroorotate.</text>
</comment>
<comment type="catalytic activity">
    <reaction evidence="1">
        <text>(S)-dihydroorotate + H2O = N-carbamoyl-L-aspartate + H(+)</text>
        <dbReference type="Rhea" id="RHEA:24296"/>
        <dbReference type="ChEBI" id="CHEBI:15377"/>
        <dbReference type="ChEBI" id="CHEBI:15378"/>
        <dbReference type="ChEBI" id="CHEBI:30864"/>
        <dbReference type="ChEBI" id="CHEBI:32814"/>
        <dbReference type="EC" id="3.5.2.3"/>
    </reaction>
</comment>
<comment type="cofactor">
    <cofactor evidence="1">
        <name>Zn(2+)</name>
        <dbReference type="ChEBI" id="CHEBI:29105"/>
    </cofactor>
    <text evidence="1">Binds 2 Zn(2+) ions per subunit.</text>
</comment>
<comment type="pathway">
    <text evidence="1">Pyrimidine metabolism; UMP biosynthesis via de novo pathway; (S)-dihydroorotate from bicarbonate: step 3/3.</text>
</comment>
<comment type="subunit">
    <text evidence="1">Homodimer.</text>
</comment>
<comment type="similarity">
    <text evidence="1">Belongs to the metallo-dependent hydrolases superfamily. DHOase family. Class II DHOase subfamily.</text>
</comment>
<accession>B7I9G6</accession>
<keyword id="KW-0378">Hydrolase</keyword>
<keyword id="KW-0479">Metal-binding</keyword>
<keyword id="KW-0665">Pyrimidine biosynthesis</keyword>
<keyword id="KW-0862">Zinc</keyword>
<reference key="1">
    <citation type="journal article" date="2008" name="J. Bacteriol.">
        <title>Comparative genome sequence analysis of multidrug-resistant Acinetobacter baumannii.</title>
        <authorList>
            <person name="Adams M.D."/>
            <person name="Goglin K."/>
            <person name="Molyneaux N."/>
            <person name="Hujer K.M."/>
            <person name="Lavender H."/>
            <person name="Jamison J.J."/>
            <person name="MacDonald I.J."/>
            <person name="Martin K.M."/>
            <person name="Russo T."/>
            <person name="Campagnari A.A."/>
            <person name="Hujer A.M."/>
            <person name="Bonomo R.A."/>
            <person name="Gill S.R."/>
        </authorList>
    </citation>
    <scope>NUCLEOTIDE SEQUENCE [LARGE SCALE GENOMIC DNA]</scope>
    <source>
        <strain>AB0057</strain>
    </source>
</reference>
<name>PYRC_ACIB5</name>
<proteinExistence type="inferred from homology"/>
<evidence type="ECO:0000255" key="1">
    <source>
        <dbReference type="HAMAP-Rule" id="MF_00219"/>
    </source>
</evidence>